<organism>
    <name type="scientific">Chlorobaculum tepidum (strain ATCC 49652 / DSM 12025 / NBRC 103806 / TLS)</name>
    <name type="common">Chlorobium tepidum</name>
    <dbReference type="NCBI Taxonomy" id="194439"/>
    <lineage>
        <taxon>Bacteria</taxon>
        <taxon>Pseudomonadati</taxon>
        <taxon>Chlorobiota</taxon>
        <taxon>Chlorobiia</taxon>
        <taxon>Chlorobiales</taxon>
        <taxon>Chlorobiaceae</taxon>
        <taxon>Chlorobaculum</taxon>
    </lineage>
</organism>
<evidence type="ECO:0000255" key="1">
    <source>
        <dbReference type="HAMAP-Rule" id="MF_00178"/>
    </source>
</evidence>
<proteinExistence type="inferred from homology"/>
<keyword id="KW-1185">Reference proteome</keyword>
<keyword id="KW-0686">Riboflavin biosynthesis</keyword>
<keyword id="KW-0808">Transferase</keyword>
<comment type="function">
    <text evidence="1">Catalyzes the formation of 6,7-dimethyl-8-ribityllumazine by condensation of 5-amino-6-(D-ribitylamino)uracil with 3,4-dihydroxy-2-butanone 4-phosphate. This is the penultimate step in the biosynthesis of riboflavin.</text>
</comment>
<comment type="catalytic activity">
    <reaction evidence="1">
        <text>(2S)-2-hydroxy-3-oxobutyl phosphate + 5-amino-6-(D-ribitylamino)uracil = 6,7-dimethyl-8-(1-D-ribityl)lumazine + phosphate + 2 H2O + H(+)</text>
        <dbReference type="Rhea" id="RHEA:26152"/>
        <dbReference type="ChEBI" id="CHEBI:15377"/>
        <dbReference type="ChEBI" id="CHEBI:15378"/>
        <dbReference type="ChEBI" id="CHEBI:15934"/>
        <dbReference type="ChEBI" id="CHEBI:43474"/>
        <dbReference type="ChEBI" id="CHEBI:58201"/>
        <dbReference type="ChEBI" id="CHEBI:58830"/>
        <dbReference type="EC" id="2.5.1.78"/>
    </reaction>
</comment>
<comment type="pathway">
    <text evidence="1">Cofactor biosynthesis; riboflavin biosynthesis; riboflavin from 2-hydroxy-3-oxobutyl phosphate and 5-amino-6-(D-ribitylamino)uracil: step 1/2.</text>
</comment>
<comment type="similarity">
    <text evidence="1">Belongs to the DMRL synthase family.</text>
</comment>
<reference key="1">
    <citation type="journal article" date="2002" name="Proc. Natl. Acad. Sci. U.S.A.">
        <title>The complete genome sequence of Chlorobium tepidum TLS, a photosynthetic, anaerobic, green-sulfur bacterium.</title>
        <authorList>
            <person name="Eisen J.A."/>
            <person name="Nelson K.E."/>
            <person name="Paulsen I.T."/>
            <person name="Heidelberg J.F."/>
            <person name="Wu M."/>
            <person name="Dodson R.J."/>
            <person name="DeBoy R.T."/>
            <person name="Gwinn M.L."/>
            <person name="Nelson W.C."/>
            <person name="Haft D.H."/>
            <person name="Hickey E.K."/>
            <person name="Peterson J.D."/>
            <person name="Durkin A.S."/>
            <person name="Kolonay J.F."/>
            <person name="Yang F."/>
            <person name="Holt I.E."/>
            <person name="Umayam L.A."/>
            <person name="Mason T.M."/>
            <person name="Brenner M."/>
            <person name="Shea T.P."/>
            <person name="Parksey D.S."/>
            <person name="Nierman W.C."/>
            <person name="Feldblyum T.V."/>
            <person name="Hansen C.L."/>
            <person name="Craven M.B."/>
            <person name="Radune D."/>
            <person name="Vamathevan J.J."/>
            <person name="Khouri H.M."/>
            <person name="White O."/>
            <person name="Gruber T.M."/>
            <person name="Ketchum K.A."/>
            <person name="Venter J.C."/>
            <person name="Tettelin H."/>
            <person name="Bryant D.A."/>
            <person name="Fraser C.M."/>
        </authorList>
    </citation>
    <scope>NUCLEOTIDE SEQUENCE [LARGE SCALE GENOMIC DNA]</scope>
    <source>
        <strain>ATCC 49652 / DSM 12025 / NBRC 103806 / TLS</strain>
    </source>
</reference>
<dbReference type="EC" id="2.5.1.78" evidence="1"/>
<dbReference type="EMBL" id="AE006470">
    <property type="protein sequence ID" value="AAM73254.1"/>
    <property type="molecule type" value="Genomic_DNA"/>
</dbReference>
<dbReference type="RefSeq" id="NP_662912.1">
    <property type="nucleotide sequence ID" value="NC_002932.3"/>
</dbReference>
<dbReference type="RefSeq" id="WP_010933692.1">
    <property type="nucleotide sequence ID" value="NC_002932.3"/>
</dbReference>
<dbReference type="SMR" id="Q8KAW4"/>
<dbReference type="STRING" id="194439.CT2037"/>
<dbReference type="EnsemblBacteria" id="AAM73254">
    <property type="protein sequence ID" value="AAM73254"/>
    <property type="gene ID" value="CT2037"/>
</dbReference>
<dbReference type="KEGG" id="cte:CT2037"/>
<dbReference type="PATRIC" id="fig|194439.7.peg.1846"/>
<dbReference type="eggNOG" id="COG0054">
    <property type="taxonomic scope" value="Bacteria"/>
</dbReference>
<dbReference type="HOGENOM" id="CLU_089358_1_1_10"/>
<dbReference type="OrthoDB" id="9809709at2"/>
<dbReference type="BRENDA" id="2.5.1.78">
    <property type="organism ID" value="1345"/>
</dbReference>
<dbReference type="UniPathway" id="UPA00275">
    <property type="reaction ID" value="UER00404"/>
</dbReference>
<dbReference type="Proteomes" id="UP000001007">
    <property type="component" value="Chromosome"/>
</dbReference>
<dbReference type="GO" id="GO:0005829">
    <property type="term" value="C:cytosol"/>
    <property type="evidence" value="ECO:0007669"/>
    <property type="project" value="TreeGrafter"/>
</dbReference>
<dbReference type="GO" id="GO:0009349">
    <property type="term" value="C:riboflavin synthase complex"/>
    <property type="evidence" value="ECO:0007669"/>
    <property type="project" value="InterPro"/>
</dbReference>
<dbReference type="GO" id="GO:0000906">
    <property type="term" value="F:6,7-dimethyl-8-ribityllumazine synthase activity"/>
    <property type="evidence" value="ECO:0007669"/>
    <property type="project" value="UniProtKB-UniRule"/>
</dbReference>
<dbReference type="GO" id="GO:0009231">
    <property type="term" value="P:riboflavin biosynthetic process"/>
    <property type="evidence" value="ECO:0007669"/>
    <property type="project" value="UniProtKB-UniRule"/>
</dbReference>
<dbReference type="CDD" id="cd09209">
    <property type="entry name" value="Lumazine_synthase-I"/>
    <property type="match status" value="1"/>
</dbReference>
<dbReference type="FunFam" id="3.40.50.960:FF:000001">
    <property type="entry name" value="6,7-dimethyl-8-ribityllumazine synthase"/>
    <property type="match status" value="1"/>
</dbReference>
<dbReference type="Gene3D" id="3.40.50.960">
    <property type="entry name" value="Lumazine/riboflavin synthase"/>
    <property type="match status" value="1"/>
</dbReference>
<dbReference type="HAMAP" id="MF_00178">
    <property type="entry name" value="Lumazine_synth"/>
    <property type="match status" value="1"/>
</dbReference>
<dbReference type="InterPro" id="IPR034964">
    <property type="entry name" value="LS"/>
</dbReference>
<dbReference type="InterPro" id="IPR002180">
    <property type="entry name" value="LS/RS"/>
</dbReference>
<dbReference type="InterPro" id="IPR036467">
    <property type="entry name" value="LS/RS_sf"/>
</dbReference>
<dbReference type="NCBIfam" id="TIGR00114">
    <property type="entry name" value="lumazine-synth"/>
    <property type="match status" value="1"/>
</dbReference>
<dbReference type="NCBIfam" id="NF000812">
    <property type="entry name" value="PRK00061.1-4"/>
    <property type="match status" value="1"/>
</dbReference>
<dbReference type="PANTHER" id="PTHR21058:SF0">
    <property type="entry name" value="6,7-DIMETHYL-8-RIBITYLLUMAZINE SYNTHASE"/>
    <property type="match status" value="1"/>
</dbReference>
<dbReference type="PANTHER" id="PTHR21058">
    <property type="entry name" value="6,7-DIMETHYL-8-RIBITYLLUMAZINE SYNTHASE DMRL SYNTHASE LUMAZINE SYNTHASE"/>
    <property type="match status" value="1"/>
</dbReference>
<dbReference type="Pfam" id="PF00885">
    <property type="entry name" value="DMRL_synthase"/>
    <property type="match status" value="1"/>
</dbReference>
<dbReference type="SUPFAM" id="SSF52121">
    <property type="entry name" value="Lumazine synthase"/>
    <property type="match status" value="1"/>
</dbReference>
<name>RISB_CHLTE</name>
<gene>
    <name evidence="1" type="primary">ribH</name>
    <name type="ordered locus">CT2037</name>
</gene>
<feature type="chain" id="PRO_0000134740" description="6,7-dimethyl-8-ribityllumazine synthase">
    <location>
        <begin position="1"/>
        <end position="155"/>
    </location>
</feature>
<feature type="active site" description="Proton donor" evidence="1">
    <location>
        <position position="90"/>
    </location>
</feature>
<feature type="binding site" evidence="1">
    <location>
        <position position="24"/>
    </location>
    <ligand>
        <name>5-amino-6-(D-ribitylamino)uracil</name>
        <dbReference type="ChEBI" id="CHEBI:15934"/>
    </ligand>
</feature>
<feature type="binding site" evidence="1">
    <location>
        <begin position="58"/>
        <end position="60"/>
    </location>
    <ligand>
        <name>5-amino-6-(D-ribitylamino)uracil</name>
        <dbReference type="ChEBI" id="CHEBI:15934"/>
    </ligand>
</feature>
<feature type="binding site" evidence="1">
    <location>
        <begin position="82"/>
        <end position="84"/>
    </location>
    <ligand>
        <name>5-amino-6-(D-ribitylamino)uracil</name>
        <dbReference type="ChEBI" id="CHEBI:15934"/>
    </ligand>
</feature>
<feature type="binding site" evidence="1">
    <location>
        <begin position="87"/>
        <end position="88"/>
    </location>
    <ligand>
        <name>(2S)-2-hydroxy-3-oxobutyl phosphate</name>
        <dbReference type="ChEBI" id="CHEBI:58830"/>
    </ligand>
</feature>
<feature type="binding site" evidence="1">
    <location>
        <position position="115"/>
    </location>
    <ligand>
        <name>5-amino-6-(D-ribitylamino)uracil</name>
        <dbReference type="ChEBI" id="CHEBI:15934"/>
    </ligand>
</feature>
<feature type="binding site" evidence="1">
    <location>
        <position position="129"/>
    </location>
    <ligand>
        <name>(2S)-2-hydroxy-3-oxobutyl phosphate</name>
        <dbReference type="ChEBI" id="CHEBI:58830"/>
    </ligand>
</feature>
<accession>Q8KAW4</accession>
<protein>
    <recommendedName>
        <fullName evidence="1">6,7-dimethyl-8-ribityllumazine synthase</fullName>
        <shortName evidence="1">DMRL synthase</shortName>
        <shortName evidence="1">LS</shortName>
        <shortName evidence="1">Lumazine synthase</shortName>
        <ecNumber evidence="1">2.5.1.78</ecNumber>
    </recommendedName>
</protein>
<sequence>MQVQNIEGSLNASGLKFALVVSRFNDFIGQKLVEGAIDCIVRHGGSADEITVIRCPGAFELPSVTRKAMLSGKYDAIVTLGVIIRGSTPHFDVIAAEATKGIAQVGMEAAIPVSFGVLTTENLEQAIERAGTKAGNKGFDAALAAIEMANLYKQL</sequence>